<gene>
    <name type="ordered locus">YPN_2036</name>
    <name type="ORF">YP516_2268</name>
</gene>
<reference key="1">
    <citation type="journal article" date="2006" name="J. Bacteriol.">
        <title>Complete genome sequence of Yersinia pestis strains Antiqua and Nepal516: evidence of gene reduction in an emerging pathogen.</title>
        <authorList>
            <person name="Chain P.S.G."/>
            <person name="Hu P."/>
            <person name="Malfatti S.A."/>
            <person name="Radnedge L."/>
            <person name="Larimer F."/>
            <person name="Vergez L.M."/>
            <person name="Worsham P."/>
            <person name="Chu M.C."/>
            <person name="Andersen G.L."/>
        </authorList>
    </citation>
    <scope>NUCLEOTIDE SEQUENCE [LARGE SCALE GENOMIC DNA]</scope>
    <source>
        <strain>Nepal516</strain>
    </source>
</reference>
<reference key="2">
    <citation type="submission" date="2009-04" db="EMBL/GenBank/DDBJ databases">
        <title>Yersinia pestis Nepal516A whole genome shotgun sequencing project.</title>
        <authorList>
            <person name="Plunkett G. III"/>
            <person name="Anderson B.D."/>
            <person name="Baumler D.J."/>
            <person name="Burland V."/>
            <person name="Cabot E.L."/>
            <person name="Glasner J.D."/>
            <person name="Mau B."/>
            <person name="Neeno-Eckwall E."/>
            <person name="Perna N.T."/>
            <person name="Munk A.C."/>
            <person name="Tapia R."/>
            <person name="Green L.D."/>
            <person name="Rogers Y.C."/>
            <person name="Detter J.C."/>
            <person name="Bruce D.C."/>
            <person name="Brettin T.S."/>
        </authorList>
    </citation>
    <scope>NUCLEOTIDE SEQUENCE [LARGE SCALE GENOMIC DNA]</scope>
    <source>
        <strain>Nepal516</strain>
    </source>
</reference>
<evidence type="ECO:0000255" key="1">
    <source>
        <dbReference type="HAMAP-Rule" id="MF_00528"/>
    </source>
</evidence>
<evidence type="ECO:0000305" key="2"/>
<accession>Q1CI15</accession>
<accession>C4GU02</accession>
<organism>
    <name type="scientific">Yersinia pestis bv. Antiqua (strain Nepal516)</name>
    <dbReference type="NCBI Taxonomy" id="377628"/>
    <lineage>
        <taxon>Bacteria</taxon>
        <taxon>Pseudomonadati</taxon>
        <taxon>Pseudomonadota</taxon>
        <taxon>Gammaproteobacteria</taxon>
        <taxon>Enterobacterales</taxon>
        <taxon>Yersiniaceae</taxon>
        <taxon>Yersinia</taxon>
    </lineage>
</organism>
<feature type="chain" id="PRO_0000267474" description="7-methyl-GTP pyrophosphatase">
    <location>
        <begin position="1"/>
        <end position="198"/>
    </location>
</feature>
<feature type="active site" description="Proton acceptor" evidence="1">
    <location>
        <position position="69"/>
    </location>
</feature>
<feature type="site" description="Important for substrate specificity" evidence="1">
    <location>
        <position position="12"/>
    </location>
</feature>
<feature type="site" description="Important for substrate specificity" evidence="1">
    <location>
        <position position="70"/>
    </location>
</feature>
<feature type="site" description="Important for substrate specificity" evidence="1">
    <location>
        <position position="154"/>
    </location>
</feature>
<sequence>MPQLVLASTSSYRRALLEKLQLPFITDAPETDETPHAGESTEALVQRLASAKAQALAGRYPQHLIIGSDQVCVIDGKITGKPLQYSTAVKQLQQASGQCVTFYTGLTLLNTANNSINCTCETFDVYFRTLSQAEIDGYLLREQPWNCAGSFKSEGLGITLFERLAGRDPNTLIGLPLIALTQMLIEQGVNPLTVKPVE</sequence>
<dbReference type="EC" id="3.6.1.-" evidence="1"/>
<dbReference type="EMBL" id="CP000305">
    <property type="protein sequence ID" value="ABG18365.1"/>
    <property type="status" value="ALT_INIT"/>
    <property type="molecule type" value="Genomic_DNA"/>
</dbReference>
<dbReference type="EMBL" id="ACNQ01000011">
    <property type="protein sequence ID" value="EEO76666.1"/>
    <property type="molecule type" value="Genomic_DNA"/>
</dbReference>
<dbReference type="RefSeq" id="WP_002210928.1">
    <property type="nucleotide sequence ID" value="NZ_ACNQ01000011.1"/>
</dbReference>
<dbReference type="SMR" id="Q1CI15"/>
<dbReference type="KEGG" id="ypn:YPN_2036"/>
<dbReference type="HOGENOM" id="CLU_040416_1_0_6"/>
<dbReference type="Proteomes" id="UP000008936">
    <property type="component" value="Chromosome"/>
</dbReference>
<dbReference type="GO" id="GO:0005737">
    <property type="term" value="C:cytoplasm"/>
    <property type="evidence" value="ECO:0007669"/>
    <property type="project" value="UniProtKB-SubCell"/>
</dbReference>
<dbReference type="GO" id="GO:0047429">
    <property type="term" value="F:nucleoside triphosphate diphosphatase activity"/>
    <property type="evidence" value="ECO:0007669"/>
    <property type="project" value="InterPro"/>
</dbReference>
<dbReference type="GO" id="GO:0009117">
    <property type="term" value="P:nucleotide metabolic process"/>
    <property type="evidence" value="ECO:0007669"/>
    <property type="project" value="UniProtKB-KW"/>
</dbReference>
<dbReference type="CDD" id="cd00555">
    <property type="entry name" value="Maf"/>
    <property type="match status" value="1"/>
</dbReference>
<dbReference type="FunFam" id="3.90.950.10:FF:000005">
    <property type="entry name" value="7-methyl-GTP pyrophosphatase"/>
    <property type="match status" value="1"/>
</dbReference>
<dbReference type="Gene3D" id="3.90.950.10">
    <property type="match status" value="1"/>
</dbReference>
<dbReference type="HAMAP" id="MF_00528">
    <property type="entry name" value="Maf"/>
    <property type="match status" value="1"/>
</dbReference>
<dbReference type="InterPro" id="IPR029001">
    <property type="entry name" value="ITPase-like_fam"/>
</dbReference>
<dbReference type="InterPro" id="IPR003697">
    <property type="entry name" value="Maf-like"/>
</dbReference>
<dbReference type="NCBIfam" id="TIGR00172">
    <property type="entry name" value="maf"/>
    <property type="match status" value="1"/>
</dbReference>
<dbReference type="PANTHER" id="PTHR43213:SF10">
    <property type="entry name" value="7-METHYL-GTP PYROPHOSPHATASE"/>
    <property type="match status" value="1"/>
</dbReference>
<dbReference type="PANTHER" id="PTHR43213">
    <property type="entry name" value="BIFUNCTIONAL DTTP/UTP PYROPHOSPHATASE/METHYLTRANSFERASE PROTEIN-RELATED"/>
    <property type="match status" value="1"/>
</dbReference>
<dbReference type="Pfam" id="PF02545">
    <property type="entry name" value="Maf"/>
    <property type="match status" value="1"/>
</dbReference>
<dbReference type="PIRSF" id="PIRSF006305">
    <property type="entry name" value="Maf"/>
    <property type="match status" value="1"/>
</dbReference>
<dbReference type="SUPFAM" id="SSF52972">
    <property type="entry name" value="ITPase-like"/>
    <property type="match status" value="1"/>
</dbReference>
<comment type="function">
    <text evidence="1">Nucleoside triphosphate pyrophosphatase that hydrolyzes 7-methyl-GTP (m(7)GTP). May have a dual role in cell division arrest and in preventing the incorporation of modified nucleotides into cellular nucleic acids.</text>
</comment>
<comment type="catalytic activity">
    <reaction evidence="1">
        <text>N(7)-methyl-GTP + H2O = N(7)-methyl-GMP + diphosphate + H(+)</text>
        <dbReference type="Rhea" id="RHEA:58744"/>
        <dbReference type="ChEBI" id="CHEBI:15377"/>
        <dbReference type="ChEBI" id="CHEBI:15378"/>
        <dbReference type="ChEBI" id="CHEBI:33019"/>
        <dbReference type="ChEBI" id="CHEBI:58285"/>
        <dbReference type="ChEBI" id="CHEBI:87133"/>
    </reaction>
</comment>
<comment type="cofactor">
    <cofactor evidence="1">
        <name>a divalent metal cation</name>
        <dbReference type="ChEBI" id="CHEBI:60240"/>
    </cofactor>
</comment>
<comment type="subcellular location">
    <subcellularLocation>
        <location evidence="1">Cytoplasm</location>
    </subcellularLocation>
</comment>
<comment type="similarity">
    <text evidence="1">Belongs to the Maf family. YceF subfamily.</text>
</comment>
<comment type="sequence caution" evidence="2">
    <conflict type="erroneous initiation">
        <sequence resource="EMBL-CDS" id="ABG18365"/>
    </conflict>
</comment>
<protein>
    <recommendedName>
        <fullName evidence="1">7-methyl-GTP pyrophosphatase</fullName>
        <shortName evidence="1">m(7)GTP pyrophosphatase</shortName>
        <ecNumber evidence="1">3.6.1.-</ecNumber>
    </recommendedName>
</protein>
<proteinExistence type="inferred from homology"/>
<name>NTPPB_YERPN</name>
<keyword id="KW-0963">Cytoplasm</keyword>
<keyword id="KW-0378">Hydrolase</keyword>
<keyword id="KW-0546">Nucleotide metabolism</keyword>